<sequence>MKWKEQAVILGTRQYGETSIILEVMTRQHGRYMGIVKGGHSRRMAGLLQPGNFVEAEWWARLDEHLGLFRLEALDLYAARLILLPEALYALQLIVFHLRLLPERDPYPSLYDILHLFMQNFDESFVNAELLVRFEMRLLEELGFGLDLSRCAATGRQERLFYVSPKSGRAVCEEAGRPWKEKLLTLPQFLVRRAIRPVNFSDIINGFILTGFFLMRHVWEPRGIKQPSVRVNLIQLFERRFRM</sequence>
<evidence type="ECO:0000255" key="1">
    <source>
        <dbReference type="HAMAP-Rule" id="MF_00201"/>
    </source>
</evidence>
<gene>
    <name evidence="1" type="primary">recO</name>
    <name type="ordered locus">BQ04300</name>
</gene>
<reference key="1">
    <citation type="journal article" date="2004" name="Proc. Natl. Acad. Sci. U.S.A.">
        <title>The louse-borne human pathogen Bartonella quintana is a genomic derivative of the zoonotic agent Bartonella henselae.</title>
        <authorList>
            <person name="Alsmark U.C.M."/>
            <person name="Frank A.C."/>
            <person name="Karlberg E.O."/>
            <person name="Legault B.-A."/>
            <person name="Ardell D.H."/>
            <person name="Canbaeck B."/>
            <person name="Eriksson A.-S."/>
            <person name="Naeslund A.K."/>
            <person name="Handley S.A."/>
            <person name="Huvet M."/>
            <person name="La Scola B."/>
            <person name="Holmberg M."/>
            <person name="Andersson S.G.E."/>
        </authorList>
    </citation>
    <scope>NUCLEOTIDE SEQUENCE [LARGE SCALE GENOMIC DNA]</scope>
    <source>
        <strain>Toulouse</strain>
    </source>
</reference>
<accession>Q6G080</accession>
<dbReference type="EMBL" id="BX897700">
    <property type="protein sequence ID" value="CAF25929.1"/>
    <property type="molecule type" value="Genomic_DNA"/>
</dbReference>
<dbReference type="RefSeq" id="WP_011179218.1">
    <property type="nucleotide sequence ID" value="NC_005955.1"/>
</dbReference>
<dbReference type="SMR" id="Q6G080"/>
<dbReference type="KEGG" id="bqu:BQ04300"/>
<dbReference type="eggNOG" id="COG1381">
    <property type="taxonomic scope" value="Bacteria"/>
</dbReference>
<dbReference type="HOGENOM" id="CLU_086029_0_0_5"/>
<dbReference type="OrthoDB" id="9804792at2"/>
<dbReference type="Proteomes" id="UP000000597">
    <property type="component" value="Chromosome"/>
</dbReference>
<dbReference type="GO" id="GO:0043590">
    <property type="term" value="C:bacterial nucleoid"/>
    <property type="evidence" value="ECO:0007669"/>
    <property type="project" value="TreeGrafter"/>
</dbReference>
<dbReference type="GO" id="GO:0006310">
    <property type="term" value="P:DNA recombination"/>
    <property type="evidence" value="ECO:0007669"/>
    <property type="project" value="UniProtKB-UniRule"/>
</dbReference>
<dbReference type="GO" id="GO:0006302">
    <property type="term" value="P:double-strand break repair"/>
    <property type="evidence" value="ECO:0007669"/>
    <property type="project" value="TreeGrafter"/>
</dbReference>
<dbReference type="Gene3D" id="2.40.50.140">
    <property type="entry name" value="Nucleic acid-binding proteins"/>
    <property type="match status" value="1"/>
</dbReference>
<dbReference type="Gene3D" id="1.20.1440.120">
    <property type="entry name" value="Recombination protein O, C-terminal domain"/>
    <property type="match status" value="1"/>
</dbReference>
<dbReference type="HAMAP" id="MF_00201">
    <property type="entry name" value="RecO"/>
    <property type="match status" value="1"/>
</dbReference>
<dbReference type="InterPro" id="IPR037278">
    <property type="entry name" value="ARFGAP/RecO"/>
</dbReference>
<dbReference type="InterPro" id="IPR022572">
    <property type="entry name" value="DNA_rep/recomb_RecO_N"/>
</dbReference>
<dbReference type="InterPro" id="IPR012340">
    <property type="entry name" value="NA-bd_OB-fold"/>
</dbReference>
<dbReference type="InterPro" id="IPR003717">
    <property type="entry name" value="RecO"/>
</dbReference>
<dbReference type="InterPro" id="IPR042242">
    <property type="entry name" value="RecO_C"/>
</dbReference>
<dbReference type="NCBIfam" id="TIGR00613">
    <property type="entry name" value="reco"/>
    <property type="match status" value="1"/>
</dbReference>
<dbReference type="PANTHER" id="PTHR33991">
    <property type="entry name" value="DNA REPAIR PROTEIN RECO"/>
    <property type="match status" value="1"/>
</dbReference>
<dbReference type="PANTHER" id="PTHR33991:SF1">
    <property type="entry name" value="DNA REPAIR PROTEIN RECO"/>
    <property type="match status" value="1"/>
</dbReference>
<dbReference type="Pfam" id="PF02565">
    <property type="entry name" value="RecO_C"/>
    <property type="match status" value="1"/>
</dbReference>
<dbReference type="Pfam" id="PF11967">
    <property type="entry name" value="RecO_N"/>
    <property type="match status" value="1"/>
</dbReference>
<dbReference type="SUPFAM" id="SSF57863">
    <property type="entry name" value="ArfGap/RecO-like zinc finger"/>
    <property type="match status" value="1"/>
</dbReference>
<dbReference type="SUPFAM" id="SSF50249">
    <property type="entry name" value="Nucleic acid-binding proteins"/>
    <property type="match status" value="1"/>
</dbReference>
<comment type="function">
    <text evidence="1">Involved in DNA repair and RecF pathway recombination.</text>
</comment>
<comment type="similarity">
    <text evidence="1">Belongs to the RecO family.</text>
</comment>
<protein>
    <recommendedName>
        <fullName evidence="1">DNA repair protein RecO</fullName>
    </recommendedName>
    <alternativeName>
        <fullName evidence="1">Recombination protein O</fullName>
    </alternativeName>
</protein>
<feature type="chain" id="PRO_0000204934" description="DNA repair protein RecO">
    <location>
        <begin position="1"/>
        <end position="243"/>
    </location>
</feature>
<name>RECO_BARQU</name>
<keyword id="KW-0227">DNA damage</keyword>
<keyword id="KW-0233">DNA recombination</keyword>
<keyword id="KW-0234">DNA repair</keyword>
<proteinExistence type="inferred from homology"/>
<organism>
    <name type="scientific">Bartonella quintana (strain Toulouse)</name>
    <name type="common">Rochalimaea quintana</name>
    <dbReference type="NCBI Taxonomy" id="283165"/>
    <lineage>
        <taxon>Bacteria</taxon>
        <taxon>Pseudomonadati</taxon>
        <taxon>Pseudomonadota</taxon>
        <taxon>Alphaproteobacteria</taxon>
        <taxon>Hyphomicrobiales</taxon>
        <taxon>Bartonellaceae</taxon>
        <taxon>Bartonella</taxon>
    </lineage>
</organism>